<evidence type="ECO:0000255" key="1">
    <source>
        <dbReference type="HAMAP-Rule" id="MF_01219"/>
    </source>
</evidence>
<organism>
    <name type="scientific">Leifsonia xyli subsp. xyli (strain CTCB07)</name>
    <dbReference type="NCBI Taxonomy" id="281090"/>
    <lineage>
        <taxon>Bacteria</taxon>
        <taxon>Bacillati</taxon>
        <taxon>Actinomycetota</taxon>
        <taxon>Actinomycetes</taxon>
        <taxon>Micrococcales</taxon>
        <taxon>Microbacteriaceae</taxon>
        <taxon>Leifsonia</taxon>
    </lineage>
</organism>
<name>PYRR_LEIXX</name>
<accession>Q6AF89</accession>
<reference key="1">
    <citation type="journal article" date="2004" name="Mol. Plant Microbe Interact.">
        <title>The genome sequence of the Gram-positive sugarcane pathogen Leifsonia xyli subsp. xyli.</title>
        <authorList>
            <person name="Monteiro-Vitorello C.B."/>
            <person name="Camargo L.E.A."/>
            <person name="Van Sluys M.A."/>
            <person name="Kitajima J.P."/>
            <person name="Truffi D."/>
            <person name="do Amaral A.M."/>
            <person name="Harakava R."/>
            <person name="de Oliveira J.C.F."/>
            <person name="Wood D."/>
            <person name="de Oliveira M.C."/>
            <person name="Miyaki C.Y."/>
            <person name="Takita M.A."/>
            <person name="da Silva A.C.R."/>
            <person name="Furlan L.R."/>
            <person name="Carraro D.M."/>
            <person name="Camarotte G."/>
            <person name="Almeida N.F. Jr."/>
            <person name="Carrer H."/>
            <person name="Coutinho L.L."/>
            <person name="El-Dorry H.A."/>
            <person name="Ferro M.I.T."/>
            <person name="Gagliardi P.R."/>
            <person name="Giglioti E."/>
            <person name="Goldman M.H.S."/>
            <person name="Goldman G.H."/>
            <person name="Kimura E.T."/>
            <person name="Ferro E.S."/>
            <person name="Kuramae E.E."/>
            <person name="Lemos E.G.M."/>
            <person name="Lemos M.V.F."/>
            <person name="Mauro S.M.Z."/>
            <person name="Machado M.A."/>
            <person name="Marino C.L."/>
            <person name="Menck C.F."/>
            <person name="Nunes L.R."/>
            <person name="Oliveira R.C."/>
            <person name="Pereira G.G."/>
            <person name="Siqueira W."/>
            <person name="de Souza A.A."/>
            <person name="Tsai S.M."/>
            <person name="Zanca A.S."/>
            <person name="Simpson A.J.G."/>
            <person name="Brumbley S.M."/>
            <person name="Setubal J.C."/>
        </authorList>
    </citation>
    <scope>NUCLEOTIDE SEQUENCE [LARGE SCALE GENOMIC DNA]</scope>
    <source>
        <strain>CTCB07</strain>
    </source>
</reference>
<proteinExistence type="inferred from homology"/>
<gene>
    <name evidence="1" type="primary">pyrR</name>
    <name type="ordered locus">Lxx11050</name>
</gene>
<keyword id="KW-0328">Glycosyltransferase</keyword>
<keyword id="KW-1185">Reference proteome</keyword>
<keyword id="KW-0804">Transcription</keyword>
<keyword id="KW-0805">Transcription regulation</keyword>
<keyword id="KW-0808">Transferase</keyword>
<comment type="function">
    <text evidence="1">Regulates the transcription of the pyrimidine nucleotide (pyr) operon in response to exogenous pyrimidines.</text>
</comment>
<comment type="function">
    <text evidence="1">Also displays a weak uracil phosphoribosyltransferase activity which is not physiologically significant.</text>
</comment>
<comment type="catalytic activity">
    <reaction evidence="1">
        <text>UMP + diphosphate = 5-phospho-alpha-D-ribose 1-diphosphate + uracil</text>
        <dbReference type="Rhea" id="RHEA:13017"/>
        <dbReference type="ChEBI" id="CHEBI:17568"/>
        <dbReference type="ChEBI" id="CHEBI:33019"/>
        <dbReference type="ChEBI" id="CHEBI:57865"/>
        <dbReference type="ChEBI" id="CHEBI:58017"/>
        <dbReference type="EC" id="2.4.2.9"/>
    </reaction>
</comment>
<comment type="similarity">
    <text evidence="1">Belongs to the purine/pyrimidine phosphoribosyltransferase family. PyrR subfamily.</text>
</comment>
<feature type="chain" id="PRO_1000139200" description="Bifunctional protein PyrR">
    <location>
        <begin position="1"/>
        <end position="183"/>
    </location>
</feature>
<feature type="short sequence motif" description="PRPP-binding" evidence="1">
    <location>
        <begin position="102"/>
        <end position="114"/>
    </location>
</feature>
<protein>
    <recommendedName>
        <fullName evidence="1">Bifunctional protein PyrR</fullName>
    </recommendedName>
    <domain>
        <recommendedName>
            <fullName evidence="1">Pyrimidine operon regulatory protein</fullName>
        </recommendedName>
    </domain>
    <domain>
        <recommendedName>
            <fullName evidence="1">Uracil phosphoribosyltransferase</fullName>
            <shortName evidence="1">UPRTase</shortName>
            <ecNumber evidence="1">2.4.2.9</ecNumber>
        </recommendedName>
    </domain>
</protein>
<dbReference type="EC" id="2.4.2.9" evidence="1"/>
<dbReference type="EMBL" id="AE016822">
    <property type="protein sequence ID" value="AAT88956.1"/>
    <property type="molecule type" value="Genomic_DNA"/>
</dbReference>
<dbReference type="RefSeq" id="WP_011185952.1">
    <property type="nucleotide sequence ID" value="NC_006087.1"/>
</dbReference>
<dbReference type="SMR" id="Q6AF89"/>
<dbReference type="STRING" id="281090.Lxx11050"/>
<dbReference type="KEGG" id="lxx:Lxx11050"/>
<dbReference type="eggNOG" id="COG2065">
    <property type="taxonomic scope" value="Bacteria"/>
</dbReference>
<dbReference type="HOGENOM" id="CLU_094234_2_1_11"/>
<dbReference type="Proteomes" id="UP000001306">
    <property type="component" value="Chromosome"/>
</dbReference>
<dbReference type="GO" id="GO:0004845">
    <property type="term" value="F:uracil phosphoribosyltransferase activity"/>
    <property type="evidence" value="ECO:0007669"/>
    <property type="project" value="UniProtKB-UniRule"/>
</dbReference>
<dbReference type="GO" id="GO:0006355">
    <property type="term" value="P:regulation of DNA-templated transcription"/>
    <property type="evidence" value="ECO:0007669"/>
    <property type="project" value="UniProtKB-UniRule"/>
</dbReference>
<dbReference type="CDD" id="cd06223">
    <property type="entry name" value="PRTases_typeI"/>
    <property type="match status" value="1"/>
</dbReference>
<dbReference type="FunFam" id="3.40.50.2020:FF:000020">
    <property type="entry name" value="Bifunctional protein PyrR"/>
    <property type="match status" value="1"/>
</dbReference>
<dbReference type="Gene3D" id="3.40.50.2020">
    <property type="match status" value="1"/>
</dbReference>
<dbReference type="HAMAP" id="MF_01219">
    <property type="entry name" value="PyrR"/>
    <property type="match status" value="1"/>
</dbReference>
<dbReference type="InterPro" id="IPR000836">
    <property type="entry name" value="PRibTrfase_dom"/>
</dbReference>
<dbReference type="InterPro" id="IPR029057">
    <property type="entry name" value="PRTase-like"/>
</dbReference>
<dbReference type="InterPro" id="IPR023050">
    <property type="entry name" value="PyrR"/>
</dbReference>
<dbReference type="InterPro" id="IPR050137">
    <property type="entry name" value="PyrR_bifunctional"/>
</dbReference>
<dbReference type="NCBIfam" id="NF003547">
    <property type="entry name" value="PRK05205.1-3"/>
    <property type="match status" value="1"/>
</dbReference>
<dbReference type="NCBIfam" id="NF003549">
    <property type="entry name" value="PRK05205.1-5"/>
    <property type="match status" value="1"/>
</dbReference>
<dbReference type="PANTHER" id="PTHR11608">
    <property type="entry name" value="BIFUNCTIONAL PROTEIN PYRR"/>
    <property type="match status" value="1"/>
</dbReference>
<dbReference type="PANTHER" id="PTHR11608:SF0">
    <property type="entry name" value="BIFUNCTIONAL PROTEIN PYRR"/>
    <property type="match status" value="1"/>
</dbReference>
<dbReference type="Pfam" id="PF00156">
    <property type="entry name" value="Pribosyltran"/>
    <property type="match status" value="1"/>
</dbReference>
<dbReference type="SUPFAM" id="SSF53271">
    <property type="entry name" value="PRTase-like"/>
    <property type="match status" value="1"/>
</dbReference>
<sequence>MVTRVVLQQADISRALTRISHEILESNRGIDGLAILGIPTRGVVLARRIAESIQRIEQEAVGASADIVGALDVTMYRDDLARNPTRAPQPTSLPGPIDGKTVVLVDDVLFSGRTIRAALDALSDLGRPRAVRLAVLVDRGHRELPIRADFVGKNLPSAASERIFVRFAEVDGQDAVTIEEGGA</sequence>